<name>GALT2_STRPN</name>
<evidence type="ECO:0000305" key="1"/>
<proteinExistence type="inferred from homology"/>
<keyword id="KW-0119">Carbohydrate metabolism</keyword>
<keyword id="KW-0963">Cytoplasm</keyword>
<keyword id="KW-0299">Galactose metabolism</keyword>
<keyword id="KW-0548">Nucleotidyltransferase</keyword>
<keyword id="KW-1185">Reference proteome</keyword>
<keyword id="KW-0808">Transferase</keyword>
<dbReference type="EC" id="2.7.7.12"/>
<dbReference type="EMBL" id="AE005672">
    <property type="protein sequence ID" value="AAK75924.1"/>
    <property type="molecule type" value="Genomic_DNA"/>
</dbReference>
<dbReference type="PIR" id="C95216">
    <property type="entry name" value="C95216"/>
</dbReference>
<dbReference type="RefSeq" id="WP_000177062.1">
    <property type="nucleotide sequence ID" value="NZ_CP155539.1"/>
</dbReference>
<dbReference type="PaxDb" id="170187-SP_1852"/>
<dbReference type="EnsemblBacteria" id="AAK75924">
    <property type="protein sequence ID" value="AAK75924"/>
    <property type="gene ID" value="SP_1852"/>
</dbReference>
<dbReference type="KEGG" id="spn:SP_1852"/>
<dbReference type="eggNOG" id="COG4468">
    <property type="taxonomic scope" value="Bacteria"/>
</dbReference>
<dbReference type="PhylomeDB" id="Q97NZ7"/>
<dbReference type="BioCyc" id="SPNE170187:G1FZB-1882-MONOMER"/>
<dbReference type="UniPathway" id="UPA00214"/>
<dbReference type="Proteomes" id="UP000000585">
    <property type="component" value="Chromosome"/>
</dbReference>
<dbReference type="GO" id="GO:0005737">
    <property type="term" value="C:cytoplasm"/>
    <property type="evidence" value="ECO:0007669"/>
    <property type="project" value="UniProtKB-SubCell"/>
</dbReference>
<dbReference type="GO" id="GO:0008108">
    <property type="term" value="F:UDP-glucose:hexose-1-phosphate uridylyltransferase activity"/>
    <property type="evidence" value="ECO:0007669"/>
    <property type="project" value="UniProtKB-UniRule"/>
</dbReference>
<dbReference type="GO" id="GO:0006012">
    <property type="term" value="P:galactose metabolic process"/>
    <property type="evidence" value="ECO:0007669"/>
    <property type="project" value="UniProtKB-UniRule"/>
</dbReference>
<dbReference type="HAMAP" id="MF_00571">
    <property type="entry name" value="GalP_UDP_trans"/>
    <property type="match status" value="1"/>
</dbReference>
<dbReference type="InterPro" id="IPR000766">
    <property type="entry name" value="GalP_uridyl_Trfase_II"/>
</dbReference>
<dbReference type="InterPro" id="IPR023425">
    <property type="entry name" value="GalP_uridyl_Trfase_II_CS"/>
</dbReference>
<dbReference type="InterPro" id="IPR005850">
    <property type="entry name" value="GalP_Utransf_C"/>
</dbReference>
<dbReference type="InterPro" id="IPR005849">
    <property type="entry name" value="GalP_Utransf_N"/>
</dbReference>
<dbReference type="NCBIfam" id="TIGR01239">
    <property type="entry name" value="galT_2"/>
    <property type="match status" value="1"/>
</dbReference>
<dbReference type="NCBIfam" id="NF003628">
    <property type="entry name" value="PRK05270.1-1"/>
    <property type="match status" value="1"/>
</dbReference>
<dbReference type="NCBIfam" id="NF003629">
    <property type="entry name" value="PRK05270.1-2"/>
    <property type="match status" value="1"/>
</dbReference>
<dbReference type="NCBIfam" id="NF003631">
    <property type="entry name" value="PRK05270.1-5"/>
    <property type="match status" value="1"/>
</dbReference>
<dbReference type="NCBIfam" id="NF003633">
    <property type="entry name" value="PRK05270.2-2"/>
    <property type="match status" value="1"/>
</dbReference>
<dbReference type="PANTHER" id="PTHR39191:SF1">
    <property type="entry name" value="DUF4922 DOMAIN-CONTAINING PROTEIN"/>
    <property type="match status" value="1"/>
</dbReference>
<dbReference type="PANTHER" id="PTHR39191">
    <property type="entry name" value="GALACTOSE-1-PHOSPHATE URIDYLYLTRANSFERASE"/>
    <property type="match status" value="1"/>
</dbReference>
<dbReference type="Pfam" id="PF02744">
    <property type="entry name" value="GalP_UDP_tr_C"/>
    <property type="match status" value="1"/>
</dbReference>
<dbReference type="Pfam" id="PF01087">
    <property type="entry name" value="GalP_UDP_transf"/>
    <property type="match status" value="1"/>
</dbReference>
<dbReference type="PIRSF" id="PIRSF006005">
    <property type="entry name" value="GalT_BS"/>
    <property type="match status" value="1"/>
</dbReference>
<dbReference type="PROSITE" id="PS01163">
    <property type="entry name" value="GAL_P_UDP_TRANSF_II"/>
    <property type="match status" value="1"/>
</dbReference>
<accession>Q97NZ7</accession>
<reference key="1">
    <citation type="journal article" date="2001" name="Science">
        <title>Complete genome sequence of a virulent isolate of Streptococcus pneumoniae.</title>
        <authorList>
            <person name="Tettelin H."/>
            <person name="Nelson K.E."/>
            <person name="Paulsen I.T."/>
            <person name="Eisen J.A."/>
            <person name="Read T.D."/>
            <person name="Peterson S.N."/>
            <person name="Heidelberg J.F."/>
            <person name="DeBoy R.T."/>
            <person name="Haft D.H."/>
            <person name="Dodson R.J."/>
            <person name="Durkin A.S."/>
            <person name="Gwinn M.L."/>
            <person name="Kolonay J.F."/>
            <person name="Nelson W.C."/>
            <person name="Peterson J.D."/>
            <person name="Umayam L.A."/>
            <person name="White O."/>
            <person name="Salzberg S.L."/>
            <person name="Lewis M.R."/>
            <person name="Radune D."/>
            <person name="Holtzapple E.K."/>
            <person name="Khouri H.M."/>
            <person name="Wolf A.M."/>
            <person name="Utterback T.R."/>
            <person name="Hansen C.L."/>
            <person name="McDonald L.A."/>
            <person name="Feldblyum T.V."/>
            <person name="Angiuoli S.V."/>
            <person name="Dickinson T."/>
            <person name="Hickey E.K."/>
            <person name="Holt I.E."/>
            <person name="Loftus B.J."/>
            <person name="Yang F."/>
            <person name="Smith H.O."/>
            <person name="Venter J.C."/>
            <person name="Dougherty B.A."/>
            <person name="Morrison D.A."/>
            <person name="Hollingshead S.K."/>
            <person name="Fraser C.M."/>
        </authorList>
    </citation>
    <scope>NUCLEOTIDE SEQUENCE [LARGE SCALE GENOMIC DNA]</scope>
    <source>
        <strain>ATCC BAA-334 / TIGR4</strain>
    </source>
</reference>
<gene>
    <name type="primary">galT2</name>
    <name type="ordered locus">SP_1852</name>
</gene>
<feature type="chain" id="PRO_0000169915" description="Galactose-1-phosphate uridylyltransferase 2">
    <location>
        <begin position="1"/>
        <end position="493"/>
    </location>
</feature>
<organism>
    <name type="scientific">Streptococcus pneumoniae serotype 4 (strain ATCC BAA-334 / TIGR4)</name>
    <dbReference type="NCBI Taxonomy" id="170187"/>
    <lineage>
        <taxon>Bacteria</taxon>
        <taxon>Bacillati</taxon>
        <taxon>Bacillota</taxon>
        <taxon>Bacilli</taxon>
        <taxon>Lactobacillales</taxon>
        <taxon>Streptococcaceae</taxon>
        <taxon>Streptococcus</taxon>
    </lineage>
</organism>
<protein>
    <recommendedName>
        <fullName>Galactose-1-phosphate uridylyltransferase 2</fullName>
        <shortName>Gal-1-P uridylyltransferase 2</shortName>
        <ecNumber>2.7.7.12</ecNumber>
    </recommendedName>
    <alternativeName>
        <fullName>UDP-glucose--hexose-1-phosphate uridylyltransferase 2</fullName>
    </alternativeName>
</protein>
<sequence>MTLVNKFVTHVISESSFEEMDRIYLTNRVLARVGEGVLEVETNLDKLIDLKDQLVEEAVRLETIEDSQTAREILGAELMDLVTPCPSQVNRDFWATYAHSPEQAIEDFYQLSQKNDYIKLKAIARNIAYRVPSDYGELEITINLSKPEKDPKEIVAAKLVQASNYPQCQLCLENEGYHGRVNHPARSNHRIIRFEMVGQEWGFQYSPYAYFNEHCIFLDGQHRPMAISRQSFERLLAIVDQFPGYFAGSNADLPIVGGSILTHDHYQGGRHVFPMELAPLQKAFRFAGFEQVKAGIVKWPMSVLRLTSDSKEDLINLADKILQEWRQYSDPAVQILAETDRTPHHTITPIARKRDGQFELDLVLRDNQTSAEYPDGIYHPHKDVQHIKKENIGLIEVMGLAILPPRLKEEVEQVASYLVGEAVTVADYHQEWADQLKSQHPDLTDKEKALAIVKDSVGAIFARVLEDAGVYKQTEQGQTAFMRFVEQVGILLD</sequence>
<comment type="catalytic activity">
    <reaction>
        <text>alpha-D-galactose 1-phosphate + UDP-alpha-D-glucose = alpha-D-glucose 1-phosphate + UDP-alpha-D-galactose</text>
        <dbReference type="Rhea" id="RHEA:13989"/>
        <dbReference type="ChEBI" id="CHEBI:58336"/>
        <dbReference type="ChEBI" id="CHEBI:58601"/>
        <dbReference type="ChEBI" id="CHEBI:58885"/>
        <dbReference type="ChEBI" id="CHEBI:66914"/>
        <dbReference type="EC" id="2.7.7.12"/>
    </reaction>
</comment>
<comment type="pathway">
    <text>Carbohydrate metabolism; galactose metabolism.</text>
</comment>
<comment type="subcellular location">
    <subcellularLocation>
        <location evidence="1">Cytoplasm</location>
    </subcellularLocation>
</comment>
<comment type="similarity">
    <text evidence="1">Belongs to the galactose-1-phosphate uridylyltransferase type 2 family.</text>
</comment>